<sequence>MRKTENTNDKSTALDEMNALDIVTLMNEEDHTVPRAITPCLPLIAEAAETIVSRFEQGGRVFTAGAGTSGRIAVLDAAELPPTFSIDESRWTGLIAGGYDAMWMPLEENEDDREKIVADLKAQSFSKDDVLIGVTASGSTPYVLGALSYAKQIGAASVSISCNADTEAGKLSDIAIEVQTGPEIIRGSTRLKAGTAQKMILNMLSTAAMVRLGRVYQNEMVNMRLLNQKLAGRAVTILMNTTGLSEDEALQALKESGNDIKAAIFMTLTNGTLEVARRCLSHENGHLKKAIQYHRKGF</sequence>
<dbReference type="EC" id="4.2.1.126" evidence="1"/>
<dbReference type="EMBL" id="AE017333">
    <property type="protein sequence ID" value="AAU43159.1"/>
    <property type="molecule type" value="Genomic_DNA"/>
</dbReference>
<dbReference type="EMBL" id="CP000002">
    <property type="protein sequence ID" value="AAU25778.1"/>
    <property type="molecule type" value="Genomic_DNA"/>
</dbReference>
<dbReference type="SMR" id="Q65CQ5"/>
<dbReference type="STRING" id="279010.BL00087"/>
<dbReference type="KEGG" id="bld:BLi04351"/>
<dbReference type="KEGG" id="bli:BL00087"/>
<dbReference type="PATRIC" id="fig|279010.13.peg.4431"/>
<dbReference type="eggNOG" id="COG2103">
    <property type="taxonomic scope" value="Bacteria"/>
</dbReference>
<dbReference type="HOGENOM" id="CLU_049049_1_1_9"/>
<dbReference type="UniPathway" id="UPA00342"/>
<dbReference type="Proteomes" id="UP000000606">
    <property type="component" value="Chromosome"/>
</dbReference>
<dbReference type="GO" id="GO:0097367">
    <property type="term" value="F:carbohydrate derivative binding"/>
    <property type="evidence" value="ECO:0007669"/>
    <property type="project" value="InterPro"/>
</dbReference>
<dbReference type="GO" id="GO:0016835">
    <property type="term" value="F:carbon-oxygen lyase activity"/>
    <property type="evidence" value="ECO:0007669"/>
    <property type="project" value="UniProtKB-UniRule"/>
</dbReference>
<dbReference type="GO" id="GO:0016803">
    <property type="term" value="F:ether hydrolase activity"/>
    <property type="evidence" value="ECO:0007669"/>
    <property type="project" value="TreeGrafter"/>
</dbReference>
<dbReference type="GO" id="GO:0046348">
    <property type="term" value="P:amino sugar catabolic process"/>
    <property type="evidence" value="ECO:0007669"/>
    <property type="project" value="InterPro"/>
</dbReference>
<dbReference type="GO" id="GO:0097173">
    <property type="term" value="P:N-acetylmuramic acid catabolic process"/>
    <property type="evidence" value="ECO:0007669"/>
    <property type="project" value="UniProtKB-UniPathway"/>
</dbReference>
<dbReference type="GO" id="GO:0009254">
    <property type="term" value="P:peptidoglycan turnover"/>
    <property type="evidence" value="ECO:0007669"/>
    <property type="project" value="TreeGrafter"/>
</dbReference>
<dbReference type="CDD" id="cd05007">
    <property type="entry name" value="SIS_Etherase"/>
    <property type="match status" value="1"/>
</dbReference>
<dbReference type="CDD" id="cd14273">
    <property type="entry name" value="UBA_TAP-C_like"/>
    <property type="match status" value="1"/>
</dbReference>
<dbReference type="FunFam" id="3.40.50.10490:FF:000014">
    <property type="entry name" value="N-acetylmuramic acid 6-phosphate etherase"/>
    <property type="match status" value="1"/>
</dbReference>
<dbReference type="Gene3D" id="1.10.8.1080">
    <property type="match status" value="1"/>
</dbReference>
<dbReference type="Gene3D" id="3.40.50.10490">
    <property type="entry name" value="Glucose-6-phosphate isomerase like protein, domain 1"/>
    <property type="match status" value="1"/>
</dbReference>
<dbReference type="HAMAP" id="MF_00068">
    <property type="entry name" value="MurQ"/>
    <property type="match status" value="1"/>
</dbReference>
<dbReference type="InterPro" id="IPR005488">
    <property type="entry name" value="Etherase_MurQ"/>
</dbReference>
<dbReference type="InterPro" id="IPR040190">
    <property type="entry name" value="MURQ/GCKR"/>
</dbReference>
<dbReference type="InterPro" id="IPR001347">
    <property type="entry name" value="SIS_dom"/>
</dbReference>
<dbReference type="InterPro" id="IPR046348">
    <property type="entry name" value="SIS_dom_sf"/>
</dbReference>
<dbReference type="NCBIfam" id="TIGR00274">
    <property type="entry name" value="N-acetylmuramic acid 6-phosphate etherase"/>
    <property type="match status" value="1"/>
</dbReference>
<dbReference type="NCBIfam" id="NF003915">
    <property type="entry name" value="PRK05441.1"/>
    <property type="match status" value="1"/>
</dbReference>
<dbReference type="NCBIfam" id="NF009222">
    <property type="entry name" value="PRK12570.1"/>
    <property type="match status" value="1"/>
</dbReference>
<dbReference type="PANTHER" id="PTHR10088">
    <property type="entry name" value="GLUCOKINASE REGULATORY PROTEIN"/>
    <property type="match status" value="1"/>
</dbReference>
<dbReference type="PANTHER" id="PTHR10088:SF4">
    <property type="entry name" value="GLUCOKINASE REGULATORY PROTEIN"/>
    <property type="match status" value="1"/>
</dbReference>
<dbReference type="Pfam" id="PF22645">
    <property type="entry name" value="GKRP_SIS_N"/>
    <property type="match status" value="1"/>
</dbReference>
<dbReference type="SUPFAM" id="SSF53697">
    <property type="entry name" value="SIS domain"/>
    <property type="match status" value="1"/>
</dbReference>
<dbReference type="PROSITE" id="PS51464">
    <property type="entry name" value="SIS"/>
    <property type="match status" value="1"/>
</dbReference>
<evidence type="ECO:0000255" key="1">
    <source>
        <dbReference type="HAMAP-Rule" id="MF_00068"/>
    </source>
</evidence>
<reference key="1">
    <citation type="journal article" date="2004" name="J. Mol. Microbiol. Biotechnol.">
        <title>The complete genome sequence of Bacillus licheniformis DSM13, an organism with great industrial potential.</title>
        <authorList>
            <person name="Veith B."/>
            <person name="Herzberg C."/>
            <person name="Steckel S."/>
            <person name="Feesche J."/>
            <person name="Maurer K.H."/>
            <person name="Ehrenreich P."/>
            <person name="Baeumer S."/>
            <person name="Henne A."/>
            <person name="Liesegang H."/>
            <person name="Merkl R."/>
            <person name="Ehrenreich A."/>
            <person name="Gottschalk G."/>
        </authorList>
    </citation>
    <scope>NUCLEOTIDE SEQUENCE [LARGE SCALE GENOMIC DNA]</scope>
    <source>
        <strain>ATCC 14580 / DSM 13 / JCM 2505 / CCUG 7422 / NBRC 12200 / NCIMB 9375 / NCTC 10341 / NRRL NRS-1264 / Gibson 46</strain>
    </source>
</reference>
<reference key="2">
    <citation type="journal article" date="2004" name="Genome Biol.">
        <title>Complete genome sequence of the industrial bacterium Bacillus licheniformis and comparisons with closely related Bacillus species.</title>
        <authorList>
            <person name="Rey M.W."/>
            <person name="Ramaiya P."/>
            <person name="Nelson B.A."/>
            <person name="Brody-Karpin S.D."/>
            <person name="Zaretsky E.J."/>
            <person name="Tang M."/>
            <person name="Lopez de Leon A."/>
            <person name="Xiang H."/>
            <person name="Gusti V."/>
            <person name="Clausen I.G."/>
            <person name="Olsen P.B."/>
            <person name="Rasmussen M.D."/>
            <person name="Andersen J.T."/>
            <person name="Joergensen P.L."/>
            <person name="Larsen T.S."/>
            <person name="Sorokin A."/>
            <person name="Bolotin A."/>
            <person name="Lapidus A."/>
            <person name="Galleron N."/>
            <person name="Ehrlich S.D."/>
            <person name="Berka R.M."/>
        </authorList>
    </citation>
    <scope>NUCLEOTIDE SEQUENCE [LARGE SCALE GENOMIC DNA]</scope>
    <source>
        <strain>ATCC 14580 / DSM 13 / JCM 2505 / CCUG 7422 / NBRC 12200 / NCIMB 9375 / NCTC 10341 / NRRL NRS-1264 / Gibson 46</strain>
    </source>
</reference>
<comment type="function">
    <text evidence="1">Specifically catalyzes the cleavage of the D-lactyl ether substituent of MurNAc 6-phosphate, producing GlcNAc 6-phosphate and D-lactate.</text>
</comment>
<comment type="catalytic activity">
    <reaction evidence="1">
        <text>N-acetyl-D-muramate 6-phosphate + H2O = N-acetyl-D-glucosamine 6-phosphate + (R)-lactate</text>
        <dbReference type="Rhea" id="RHEA:26410"/>
        <dbReference type="ChEBI" id="CHEBI:15377"/>
        <dbReference type="ChEBI" id="CHEBI:16004"/>
        <dbReference type="ChEBI" id="CHEBI:57513"/>
        <dbReference type="ChEBI" id="CHEBI:58722"/>
        <dbReference type="EC" id="4.2.1.126"/>
    </reaction>
</comment>
<comment type="pathway">
    <text evidence="1">Amino-sugar metabolism; N-acetylmuramate degradation.</text>
</comment>
<comment type="subunit">
    <text evidence="1">Homodimer.</text>
</comment>
<comment type="miscellaneous">
    <text evidence="1">A lyase-type mechanism (elimination/hydration) is suggested for the cleavage of the lactyl ether bond of MurNAc 6-phosphate, with the formation of an alpha,beta-unsaturated aldehyde intermediate with (E)-stereochemistry, followed by the syn addition of water to give product.</text>
</comment>
<comment type="similarity">
    <text evidence="1">Belongs to the GCKR-like family. MurNAc-6-P etherase subfamily.</text>
</comment>
<proteinExistence type="inferred from homology"/>
<feature type="chain" id="PRO_0000249610" description="N-acetylmuramic acid 6-phosphate etherase 2">
    <location>
        <begin position="1"/>
        <end position="298"/>
    </location>
</feature>
<feature type="domain" description="SIS" evidence="1">
    <location>
        <begin position="51"/>
        <end position="214"/>
    </location>
</feature>
<feature type="active site" description="Proton donor" evidence="1">
    <location>
        <position position="79"/>
    </location>
</feature>
<feature type="active site" evidence="1">
    <location>
        <position position="110"/>
    </location>
</feature>
<keyword id="KW-0119">Carbohydrate metabolism</keyword>
<keyword id="KW-0456">Lyase</keyword>
<keyword id="KW-1185">Reference proteome</keyword>
<accession>Q65CQ5</accession>
<accession>Q62N83</accession>
<protein>
    <recommendedName>
        <fullName evidence="1">N-acetylmuramic acid 6-phosphate etherase 2</fullName>
        <shortName evidence="1">MurNAc-6-P etherase 2</shortName>
        <ecNumber evidence="1">4.2.1.126</ecNumber>
    </recommendedName>
    <alternativeName>
        <fullName evidence="1">N-acetylmuramic acid 6-phosphate hydrolase 2</fullName>
    </alternativeName>
    <alternativeName>
        <fullName evidence="1">N-acetylmuramic acid 6-phosphate lyase 2</fullName>
    </alternativeName>
</protein>
<organism>
    <name type="scientific">Bacillus licheniformis (strain ATCC 14580 / DSM 13 / JCM 2505 / CCUG 7422 / NBRC 12200 / NCIMB 9375 / NCTC 10341 / NRRL NRS-1264 / Gibson 46)</name>
    <dbReference type="NCBI Taxonomy" id="279010"/>
    <lineage>
        <taxon>Bacteria</taxon>
        <taxon>Bacillati</taxon>
        <taxon>Bacillota</taxon>
        <taxon>Bacilli</taxon>
        <taxon>Bacillales</taxon>
        <taxon>Bacillaceae</taxon>
        <taxon>Bacillus</taxon>
    </lineage>
</organism>
<gene>
    <name evidence="1" type="primary">murQ2</name>
    <name type="ordered locus">BLi04351</name>
    <name type="ordered locus">BL00087</name>
</gene>
<name>MURQ2_BACLD</name>